<dbReference type="EC" id="2.6.1.37" evidence="1"/>
<dbReference type="EMBL" id="CP000926">
    <property type="protein sequence ID" value="ABY97737.1"/>
    <property type="molecule type" value="Genomic_DNA"/>
</dbReference>
<dbReference type="RefSeq" id="WP_012271496.1">
    <property type="nucleotide sequence ID" value="NC_010322.1"/>
</dbReference>
<dbReference type="SMR" id="B0KIG1"/>
<dbReference type="KEGG" id="ppg:PputGB1_1834"/>
<dbReference type="eggNOG" id="COG0075">
    <property type="taxonomic scope" value="Bacteria"/>
</dbReference>
<dbReference type="HOGENOM" id="CLU_027686_3_1_6"/>
<dbReference type="Proteomes" id="UP000002157">
    <property type="component" value="Chromosome"/>
</dbReference>
<dbReference type="GO" id="GO:0047304">
    <property type="term" value="F:2-aminoethylphosphonate-pyruvate transaminase activity"/>
    <property type="evidence" value="ECO:0007669"/>
    <property type="project" value="UniProtKB-UniRule"/>
</dbReference>
<dbReference type="GO" id="GO:0019700">
    <property type="term" value="P:organic phosphonate catabolic process"/>
    <property type="evidence" value="ECO:0007669"/>
    <property type="project" value="InterPro"/>
</dbReference>
<dbReference type="Gene3D" id="3.90.1150.10">
    <property type="entry name" value="Aspartate Aminotransferase, domain 1"/>
    <property type="match status" value="1"/>
</dbReference>
<dbReference type="Gene3D" id="3.40.640.10">
    <property type="entry name" value="Type I PLP-dependent aspartate aminotransferase-like (Major domain)"/>
    <property type="match status" value="1"/>
</dbReference>
<dbReference type="HAMAP" id="MF_01376">
    <property type="entry name" value="PhnW_aminotrans_5"/>
    <property type="match status" value="1"/>
</dbReference>
<dbReference type="InterPro" id="IPR000192">
    <property type="entry name" value="Aminotrans_V_dom"/>
</dbReference>
<dbReference type="InterPro" id="IPR012703">
    <property type="entry name" value="NH2EtPonate_pyrv_transaminase"/>
</dbReference>
<dbReference type="InterPro" id="IPR015424">
    <property type="entry name" value="PyrdxlP-dep_Trfase"/>
</dbReference>
<dbReference type="InterPro" id="IPR015421">
    <property type="entry name" value="PyrdxlP-dep_Trfase_major"/>
</dbReference>
<dbReference type="InterPro" id="IPR015422">
    <property type="entry name" value="PyrdxlP-dep_Trfase_small"/>
</dbReference>
<dbReference type="InterPro" id="IPR024169">
    <property type="entry name" value="SP_NH2Trfase/AEP_transaminase"/>
</dbReference>
<dbReference type="NCBIfam" id="TIGR03301">
    <property type="entry name" value="PhnW-AepZ"/>
    <property type="match status" value="1"/>
</dbReference>
<dbReference type="NCBIfam" id="NF010006">
    <property type="entry name" value="PRK13479.1"/>
    <property type="match status" value="1"/>
</dbReference>
<dbReference type="NCBIfam" id="TIGR02326">
    <property type="entry name" value="transamin_PhnW"/>
    <property type="match status" value="1"/>
</dbReference>
<dbReference type="PANTHER" id="PTHR42778">
    <property type="entry name" value="2-AMINOETHYLPHOSPHONATE--PYRUVATE TRANSAMINASE"/>
    <property type="match status" value="1"/>
</dbReference>
<dbReference type="PANTHER" id="PTHR42778:SF1">
    <property type="entry name" value="2-AMINOETHYLPHOSPHONATE--PYRUVATE TRANSAMINASE"/>
    <property type="match status" value="1"/>
</dbReference>
<dbReference type="Pfam" id="PF00266">
    <property type="entry name" value="Aminotran_5"/>
    <property type="match status" value="1"/>
</dbReference>
<dbReference type="PIRSF" id="PIRSF000524">
    <property type="entry name" value="SPT"/>
    <property type="match status" value="1"/>
</dbReference>
<dbReference type="SUPFAM" id="SSF53383">
    <property type="entry name" value="PLP-dependent transferases"/>
    <property type="match status" value="1"/>
</dbReference>
<reference key="1">
    <citation type="submission" date="2008-01" db="EMBL/GenBank/DDBJ databases">
        <title>Complete sequence of Pseudomonas putida GB-1.</title>
        <authorList>
            <consortium name="US DOE Joint Genome Institute"/>
            <person name="Copeland A."/>
            <person name="Lucas S."/>
            <person name="Lapidus A."/>
            <person name="Barry K."/>
            <person name="Glavina del Rio T."/>
            <person name="Dalin E."/>
            <person name="Tice H."/>
            <person name="Pitluck S."/>
            <person name="Bruce D."/>
            <person name="Goodwin L."/>
            <person name="Chertkov O."/>
            <person name="Brettin T."/>
            <person name="Detter J.C."/>
            <person name="Han C."/>
            <person name="Kuske C.R."/>
            <person name="Schmutz J."/>
            <person name="Larimer F."/>
            <person name="Land M."/>
            <person name="Hauser L."/>
            <person name="Kyrpides N."/>
            <person name="Kim E."/>
            <person name="McCarthy J.K."/>
            <person name="Richardson P."/>
        </authorList>
    </citation>
    <scope>NUCLEOTIDE SEQUENCE [LARGE SCALE GENOMIC DNA]</scope>
    <source>
        <strain>GB-1</strain>
    </source>
</reference>
<keyword id="KW-0032">Aminotransferase</keyword>
<keyword id="KW-0663">Pyridoxal phosphate</keyword>
<keyword id="KW-0670">Pyruvate</keyword>
<keyword id="KW-0808">Transferase</keyword>
<name>PHNW_PSEPG</name>
<evidence type="ECO:0000255" key="1">
    <source>
        <dbReference type="HAMAP-Rule" id="MF_01376"/>
    </source>
</evidence>
<proteinExistence type="inferred from homology"/>
<feature type="chain" id="PRO_1000087290" description="2-aminoethylphosphonate--pyruvate transaminase">
    <location>
        <begin position="1"/>
        <end position="368"/>
    </location>
</feature>
<feature type="modified residue" description="N6-(pyridoxal phosphate)lysine" evidence="1">
    <location>
        <position position="192"/>
    </location>
</feature>
<sequence length="368" mass="39662">MSNAPILLTPGPLTTSIRTRQAMLVDWGSWDRDFNQLTASVCEQLLAIIDGSASHHCVPLQGSGTFAVEAAIGTLVPRDGKVLVLINGAYGQRLAKICKVLGRPYSTFETAEDQPTTAADVDRLLAADPAVTHVALIHCETSTGILNPLPEIAQVIKRHGKRLIIDAMSSFGALPIDAREIPFEALIAASGKCLEGVPGMGFVFAEKTALAAAEGNAHSLAMDLHDQHAYMAKTGQWRFTPPTHVVAALHEALQQYNEEGGLPARHQRYADNCKTLLDGMAAIGLRSFLPAEIQAPIIVTFHAPNDARYQFKDFYERVKAKGFILYPGKLTQVETFRVGCIGVVGADGMQAAVNAVAQVLREMEVLDI</sequence>
<gene>
    <name evidence="1" type="primary">phnW</name>
    <name type="ordered locus">PputGB1_1834</name>
</gene>
<organism>
    <name type="scientific">Pseudomonas putida (strain GB-1)</name>
    <dbReference type="NCBI Taxonomy" id="76869"/>
    <lineage>
        <taxon>Bacteria</taxon>
        <taxon>Pseudomonadati</taxon>
        <taxon>Pseudomonadota</taxon>
        <taxon>Gammaproteobacteria</taxon>
        <taxon>Pseudomonadales</taxon>
        <taxon>Pseudomonadaceae</taxon>
        <taxon>Pseudomonas</taxon>
    </lineage>
</organism>
<protein>
    <recommendedName>
        <fullName evidence="1">2-aminoethylphosphonate--pyruvate transaminase</fullName>
        <ecNumber evidence="1">2.6.1.37</ecNumber>
    </recommendedName>
    <alternativeName>
        <fullName evidence="1">2-aminoethylphosphonate aminotransferase</fullName>
    </alternativeName>
    <alternativeName>
        <fullName evidence="1">AEP transaminase</fullName>
        <shortName evidence="1">AEPT</shortName>
    </alternativeName>
</protein>
<comment type="function">
    <text evidence="1">Involved in phosphonate degradation.</text>
</comment>
<comment type="catalytic activity">
    <reaction evidence="1">
        <text>(2-aminoethyl)phosphonate + pyruvate = phosphonoacetaldehyde + L-alanine</text>
        <dbReference type="Rhea" id="RHEA:17021"/>
        <dbReference type="ChEBI" id="CHEBI:15361"/>
        <dbReference type="ChEBI" id="CHEBI:57418"/>
        <dbReference type="ChEBI" id="CHEBI:57972"/>
        <dbReference type="ChEBI" id="CHEBI:58383"/>
        <dbReference type="EC" id="2.6.1.37"/>
    </reaction>
</comment>
<comment type="cofactor">
    <cofactor evidence="1">
        <name>pyridoxal 5'-phosphate</name>
        <dbReference type="ChEBI" id="CHEBI:597326"/>
    </cofactor>
</comment>
<comment type="subunit">
    <text evidence="1">Homodimer.</text>
</comment>
<comment type="similarity">
    <text evidence="1">Belongs to the class-V pyridoxal-phosphate-dependent aminotransferase family. PhnW subfamily.</text>
</comment>
<accession>B0KIG1</accession>